<accession>Q07944</accession>
<geneLocation type="plasmid">
    <name>pHMT112</name>
</geneLocation>
<evidence type="ECO:0000250" key="1"/>
<evidence type="ECO:0000255" key="2">
    <source>
        <dbReference type="PROSITE-ProRule" id="PRU00628"/>
    </source>
</evidence>
<evidence type="ECO:0000305" key="3"/>
<organism>
    <name type="scientific">Pseudomonas putida</name>
    <name type="common">Arthrobacter siderocapsulatus</name>
    <dbReference type="NCBI Taxonomy" id="303"/>
    <lineage>
        <taxon>Bacteria</taxon>
        <taxon>Pseudomonadati</taxon>
        <taxon>Pseudomonadota</taxon>
        <taxon>Gammaproteobacteria</taxon>
        <taxon>Pseudomonadales</taxon>
        <taxon>Pseudomonadaceae</taxon>
        <taxon>Pseudomonas</taxon>
    </lineage>
</organism>
<feature type="chain" id="PRO_0000085044" description="Benzene 1,2-dioxygenase subunit alpha">
    <location>
        <begin position="1"/>
        <end position="450"/>
    </location>
</feature>
<feature type="domain" description="Rieske" evidence="2">
    <location>
        <begin position="56"/>
        <end position="163"/>
    </location>
</feature>
<feature type="binding site" evidence="2">
    <location>
        <position position="96"/>
    </location>
    <ligand>
        <name>[2Fe-2S] cluster</name>
        <dbReference type="ChEBI" id="CHEBI:190135"/>
    </ligand>
</feature>
<feature type="binding site" evidence="2">
    <location>
        <position position="98"/>
    </location>
    <ligand>
        <name>[2Fe-2S] cluster</name>
        <dbReference type="ChEBI" id="CHEBI:190135"/>
    </ligand>
</feature>
<feature type="binding site" evidence="2">
    <location>
        <position position="116"/>
    </location>
    <ligand>
        <name>[2Fe-2S] cluster</name>
        <dbReference type="ChEBI" id="CHEBI:190135"/>
    </ligand>
</feature>
<feature type="binding site" evidence="2">
    <location>
        <position position="119"/>
    </location>
    <ligand>
        <name>[2Fe-2S] cluster</name>
        <dbReference type="ChEBI" id="CHEBI:190135"/>
    </ligand>
</feature>
<feature type="binding site" evidence="1">
    <location>
        <position position="222"/>
    </location>
    <ligand>
        <name>Fe cation</name>
        <dbReference type="ChEBI" id="CHEBI:24875"/>
    </ligand>
</feature>
<feature type="binding site" evidence="1">
    <location>
        <position position="228"/>
    </location>
    <ligand>
        <name>Fe cation</name>
        <dbReference type="ChEBI" id="CHEBI:24875"/>
    </ligand>
</feature>
<keyword id="KW-0001">2Fe-2S</keyword>
<keyword id="KW-0058">Aromatic hydrocarbons catabolism</keyword>
<keyword id="KW-0223">Dioxygenase</keyword>
<keyword id="KW-0903">Direct protein sequencing</keyword>
<keyword id="KW-0408">Iron</keyword>
<keyword id="KW-0411">Iron-sulfur</keyword>
<keyword id="KW-0479">Metal-binding</keyword>
<keyword id="KW-0520">NAD</keyword>
<keyword id="KW-0560">Oxidoreductase</keyword>
<keyword id="KW-0614">Plasmid</keyword>
<dbReference type="EC" id="1.14.12.3"/>
<dbReference type="EMBL" id="AF148496">
    <property type="protein sequence ID" value="AAA17758.1"/>
    <property type="molecule type" value="Genomic_DNA"/>
</dbReference>
<dbReference type="PIR" id="JN0812">
    <property type="entry name" value="JN0812"/>
</dbReference>
<dbReference type="SMR" id="Q07944"/>
<dbReference type="BioCyc" id="MetaCyc:MONOMER-12880"/>
<dbReference type="UniPathway" id="UPA00272">
    <property type="reaction ID" value="UER00391"/>
</dbReference>
<dbReference type="GO" id="GO:0051537">
    <property type="term" value="F:2 iron, 2 sulfur cluster binding"/>
    <property type="evidence" value="ECO:0007669"/>
    <property type="project" value="UniProtKB-KW"/>
</dbReference>
<dbReference type="GO" id="GO:0018619">
    <property type="term" value="F:benzene 1,2-dioxygenase activity"/>
    <property type="evidence" value="ECO:0007669"/>
    <property type="project" value="UniProtKB-EC"/>
</dbReference>
<dbReference type="GO" id="GO:0005506">
    <property type="term" value="F:iron ion binding"/>
    <property type="evidence" value="ECO:0007669"/>
    <property type="project" value="InterPro"/>
</dbReference>
<dbReference type="GO" id="GO:0009056">
    <property type="term" value="P:catabolic process"/>
    <property type="evidence" value="ECO:0007669"/>
    <property type="project" value="UniProtKB-KW"/>
</dbReference>
<dbReference type="CDD" id="cd08881">
    <property type="entry name" value="RHO_alpha_C_NDO-like"/>
    <property type="match status" value="1"/>
</dbReference>
<dbReference type="Gene3D" id="3.90.380.10">
    <property type="entry name" value="Naphthalene 1,2-dioxygenase Alpha Subunit, Chain A, domain 1"/>
    <property type="match status" value="1"/>
</dbReference>
<dbReference type="Gene3D" id="2.102.10.10">
    <property type="entry name" value="Rieske [2Fe-2S] iron-sulphur domain"/>
    <property type="match status" value="1"/>
</dbReference>
<dbReference type="InterPro" id="IPR043266">
    <property type="entry name" value="RHO_NdoB-like_C"/>
</dbReference>
<dbReference type="InterPro" id="IPR017941">
    <property type="entry name" value="Rieske_2Fe-2S"/>
</dbReference>
<dbReference type="InterPro" id="IPR036922">
    <property type="entry name" value="Rieske_2Fe-2S_sf"/>
</dbReference>
<dbReference type="InterPro" id="IPR015881">
    <property type="entry name" value="Ring-hydroxy_dOase_2Fe2S_BS"/>
</dbReference>
<dbReference type="InterPro" id="IPR015879">
    <property type="entry name" value="Ring_hydroxy_dOase_asu_C_dom"/>
</dbReference>
<dbReference type="InterPro" id="IPR001663">
    <property type="entry name" value="Rng_hydr_dOase-A"/>
</dbReference>
<dbReference type="PANTHER" id="PTHR43756:SF1">
    <property type="entry name" value="3-PHENYLPROPIONATE_CINNAMIC ACID DIOXYGENASE SUBUNIT ALPHA"/>
    <property type="match status" value="1"/>
</dbReference>
<dbReference type="PANTHER" id="PTHR43756">
    <property type="entry name" value="CHOLINE MONOOXYGENASE, CHLOROPLASTIC"/>
    <property type="match status" value="1"/>
</dbReference>
<dbReference type="Pfam" id="PF00355">
    <property type="entry name" value="Rieske"/>
    <property type="match status" value="1"/>
</dbReference>
<dbReference type="Pfam" id="PF00848">
    <property type="entry name" value="Ring_hydroxyl_A"/>
    <property type="match status" value="1"/>
</dbReference>
<dbReference type="PRINTS" id="PR00090">
    <property type="entry name" value="RNGDIOXGNASE"/>
</dbReference>
<dbReference type="SUPFAM" id="SSF55961">
    <property type="entry name" value="Bet v1-like"/>
    <property type="match status" value="1"/>
</dbReference>
<dbReference type="SUPFAM" id="SSF50022">
    <property type="entry name" value="ISP domain"/>
    <property type="match status" value="1"/>
</dbReference>
<dbReference type="PROSITE" id="PS51296">
    <property type="entry name" value="RIESKE"/>
    <property type="match status" value="1"/>
</dbReference>
<dbReference type="PROSITE" id="PS00570">
    <property type="entry name" value="RING_HYDROXYL_ALPHA"/>
    <property type="match status" value="1"/>
</dbReference>
<name>BEDC1_PSEPU</name>
<reference key="1">
    <citation type="journal article" date="1993" name="Gene">
        <title>The Pseudomonas putida ML2 plasmid-encoded genes for benzene dioxygenase are unusual in codon usage and low in G+C content.</title>
        <authorList>
            <person name="Tan H.-M."/>
            <person name="Tang H.-Y."/>
            <person name="Joannou C."/>
            <person name="Abdel-Wahab N.H."/>
            <person name="Mason J.R."/>
        </authorList>
    </citation>
    <scope>NUCLEOTIDE SEQUENCE [GENOMIC DNA]</scope>
    <scope>PROTEIN SEQUENCE OF 1-15</scope>
    <source>
        <strain>ML2</strain>
    </source>
</reference>
<gene>
    <name type="primary">bedC1</name>
</gene>
<protein>
    <recommendedName>
        <fullName>Benzene 1,2-dioxygenase subunit alpha</fullName>
        <ecNumber>1.14.12.3</ecNumber>
    </recommendedName>
</protein>
<proteinExistence type="evidence at protein level"/>
<comment type="catalytic activity">
    <reaction>
        <text>benzene + NADH + O2 + H(+) = cis-1,2-dihydrobenzene-1,2-diol + NAD(+)</text>
        <dbReference type="Rhea" id="RHEA:13813"/>
        <dbReference type="ChEBI" id="CHEBI:15378"/>
        <dbReference type="ChEBI" id="CHEBI:15379"/>
        <dbReference type="ChEBI" id="CHEBI:16190"/>
        <dbReference type="ChEBI" id="CHEBI:16716"/>
        <dbReference type="ChEBI" id="CHEBI:57540"/>
        <dbReference type="ChEBI" id="CHEBI:57945"/>
        <dbReference type="EC" id="1.14.12.3"/>
    </reaction>
</comment>
<comment type="cofactor">
    <cofactor evidence="3">
        <name>[2Fe-2S] cluster</name>
        <dbReference type="ChEBI" id="CHEBI:190135"/>
    </cofactor>
    <text evidence="3">Binds 1 [2Fe-2S] cluster.</text>
</comment>
<comment type="cofactor">
    <cofactor evidence="3">
        <name>Fe cation</name>
        <dbReference type="ChEBI" id="CHEBI:24875"/>
    </cofactor>
    <text evidence="3">Binds 1 Fe cation.</text>
</comment>
<comment type="pathway">
    <text>Aromatic compound metabolism; benzene degradation; catechol from benzene: step 1/2.</text>
</comment>
<comment type="subunit">
    <text>This dioxygenase system consists of four proteins: the two subunits of the hydroxylase component (BedC1 and BedC2), a ferredoxin (BedB) and a ferredoxin reductase (BedA).</text>
</comment>
<comment type="similarity">
    <text evidence="3">Belongs to the bacterial ring-hydroxylating dioxygenase alpha subunit family.</text>
</comment>
<sequence length="450" mass="51109">MNQTETTPIRVRKNWKTSEIETLFDEQAGRIDPRIYTDEDLYQLELERVFARSWLLLGHETHIRKPGDYFTTYMGEDPVVVVRQKDASIAVFLNQCRHRGMRICRSDAGNAKAFTCSYHGWAYDTAGNLINVPYEAESFACLDKKEWSPLKARVETYKGLIFANWDENAIDLDTYLGEAKFYMDHMLDRTEAGTEVIPGIQKWVIPCNWKFAAEQFCSDMYHAGTTAHLSGIIAGLPEDLELADLAPPKFGKQYRASWGGHGSGFYIGDPNMMLAMMGPKVTSYLTEGPAAEKAAERLGSIERGTKIMLEHMTVFPTCSFLPGVNTIRTWHPRGPNEVEVWAFTVVDADAPDDIKEEFRRQTLRTFSAGGVFEQDDGENWVEIQHILRGHKARSRPFNAEMSMGQTVDNDPIYPGRISNNVYSEEAARGLYAHWLKMMTSPDWEALKATR</sequence>